<name>GLCNK_STRJI</name>
<evidence type="ECO:0000255" key="1">
    <source>
        <dbReference type="HAMAP-Rule" id="MF_02218"/>
    </source>
</evidence>
<evidence type="ECO:0000269" key="2">
    <source>
    </source>
</evidence>
<evidence type="ECO:0000303" key="3">
    <source>
    </source>
</evidence>
<evidence type="ECO:0000305" key="4">
    <source>
    </source>
</evidence>
<evidence type="ECO:0000312" key="5">
    <source>
        <dbReference type="EMBL" id="SEL87111.1"/>
    </source>
</evidence>
<evidence type="ECO:0007829" key="6">
    <source>
        <dbReference type="PDB" id="6HWJ"/>
    </source>
</evidence>
<evidence type="ECO:0007829" key="7">
    <source>
        <dbReference type="PDB" id="6HWL"/>
    </source>
</evidence>
<keyword id="KW-0002">3D-structure</keyword>
<keyword id="KW-0067">ATP-binding</keyword>
<keyword id="KW-0119">Carbohydrate metabolism</keyword>
<keyword id="KW-0418">Kinase</keyword>
<keyword id="KW-0460">Magnesium</keyword>
<keyword id="KW-0479">Metal-binding</keyword>
<keyword id="KW-0547">Nucleotide-binding</keyword>
<keyword id="KW-1185">Reference proteome</keyword>
<keyword id="KW-0808">Transferase</keyword>
<organism>
    <name type="scientific">Streptacidiphilus jiangxiensis</name>
    <dbReference type="NCBI Taxonomy" id="235985"/>
    <lineage>
        <taxon>Bacteria</taxon>
        <taxon>Bacillati</taxon>
        <taxon>Actinomycetota</taxon>
        <taxon>Actinomycetes</taxon>
        <taxon>Kitasatosporales</taxon>
        <taxon>Streptomycetaceae</taxon>
        <taxon>Streptacidiphilus</taxon>
    </lineage>
</organism>
<proteinExistence type="evidence at protein level"/>
<gene>
    <name evidence="5" type="ORF">SAMN05414137_114149</name>
</gene>
<accession>A0A1H7TQR5</accession>
<sequence length="438" mass="46730">MTPNWSELVAAADPALVLPSGERRAEVAVPGPLRLDALLDLGEGHAVGVVRSADAARWTVPLVRDGAGGVRRSRPGDGTAEHLVAALARRGATPDAAFVLEAFTGAAPVTGERGIIVDQTNESVIVGECAVVKWAVRLPAEGEPGSPAAQRIAALARGGFTEMPRPWGLLTLAEGAQPVLLASVVAYLPGALDGWDWAVDDVRRLARGELTMDQALLPAAQLGTLTARMHAALAARGRTPATAADVAAWGVRMREELDEAVASVPGAEGERLKAWAPRIADVYAELDALAGTPLIDVHGDFHVGQILRADGRYAVVDFDGNPVLPADQRAARQPAALDVVGMTASLDHVGRVVVFRTPDVDPAPVRAWIAAAQRSFLDAYRTTLARLDADDLFDDRLLTPLRYAQEVREYLYAVRHLPHWVYVPDLSLTDLLPERLKD</sequence>
<feature type="chain" id="PRO_0000447645" description="Glucosamine kinase">
    <location>
        <begin position="1"/>
        <end position="438"/>
    </location>
</feature>
<feature type="short sequence motif" description="Substrate specificity determinant motif" evidence="4">
    <location>
        <begin position="405"/>
        <end position="420"/>
    </location>
</feature>
<feature type="binding site" evidence="4">
    <location>
        <position position="133"/>
    </location>
    <ligand>
        <name>ATP</name>
        <dbReference type="ChEBI" id="CHEBI:30616"/>
    </ligand>
</feature>
<feature type="binding site" evidence="4">
    <location>
        <begin position="186"/>
        <end position="188"/>
    </location>
    <ligand>
        <name>ATP</name>
        <dbReference type="ChEBI" id="CHEBI:30616"/>
    </ligand>
</feature>
<feature type="binding site" evidence="4">
    <location>
        <position position="193"/>
    </location>
    <ligand>
        <name>ATP</name>
        <dbReference type="ChEBI" id="CHEBI:30616"/>
    </ligand>
</feature>
<feature type="binding site" evidence="2">
    <location>
        <position position="300"/>
    </location>
    <ligand>
        <name>D-glucosamine</name>
        <dbReference type="ChEBI" id="CHEBI:58723"/>
    </ligand>
</feature>
<feature type="binding site" evidence="2">
    <location>
        <position position="305"/>
    </location>
    <ligand>
        <name>Mg(2+)</name>
        <dbReference type="ChEBI" id="CHEBI:18420"/>
        <label>1</label>
    </ligand>
</feature>
<feature type="binding site" evidence="2">
    <location>
        <position position="317"/>
    </location>
    <ligand>
        <name>Mg(2+)</name>
        <dbReference type="ChEBI" id="CHEBI:18420"/>
        <label>1</label>
    </ligand>
</feature>
<feature type="binding site" evidence="2">
    <location>
        <position position="317"/>
    </location>
    <ligand>
        <name>Mg(2+)</name>
        <dbReference type="ChEBI" id="CHEBI:18420"/>
        <label>2</label>
    </ligand>
</feature>
<feature type="binding site" evidence="2">
    <location>
        <position position="319"/>
    </location>
    <ligand>
        <name>Mg(2+)</name>
        <dbReference type="ChEBI" id="CHEBI:18420"/>
        <label>2</label>
    </ligand>
</feature>
<feature type="binding site" evidence="2">
    <location>
        <position position="409"/>
    </location>
    <ligand>
        <name>D-glucosamine</name>
        <dbReference type="ChEBI" id="CHEBI:58723"/>
    </ligand>
</feature>
<feature type="mutagenesis site" description="Marked decrease of the GlcN-phosphorylating activity of the enzyme, while no effect is observed for glucose." evidence="2">
    <original>Q</original>
    <variation>A</variation>
    <location>
        <position position="405"/>
    </location>
</feature>
<feature type="helix" evidence="6">
    <location>
        <begin position="5"/>
        <end position="11"/>
    </location>
</feature>
<feature type="helix" evidence="6">
    <location>
        <begin position="14"/>
        <end position="17"/>
    </location>
</feature>
<feature type="helix" evidence="6">
    <location>
        <begin position="25"/>
        <end position="27"/>
    </location>
</feature>
<feature type="strand" evidence="6">
    <location>
        <begin position="34"/>
        <end position="42"/>
    </location>
</feature>
<feature type="strand" evidence="6">
    <location>
        <begin position="45"/>
        <end position="51"/>
    </location>
</feature>
<feature type="strand" evidence="6">
    <location>
        <begin position="57"/>
        <end position="65"/>
    </location>
</feature>
<feature type="turn" evidence="6">
    <location>
        <begin position="66"/>
        <end position="68"/>
    </location>
</feature>
<feature type="strand" evidence="6">
    <location>
        <begin position="69"/>
        <end position="72"/>
    </location>
</feature>
<feature type="helix" evidence="6">
    <location>
        <begin position="79"/>
        <end position="88"/>
    </location>
</feature>
<feature type="strand" evidence="6">
    <location>
        <begin position="98"/>
        <end position="102"/>
    </location>
</feature>
<feature type="strand" evidence="6">
    <location>
        <begin position="112"/>
        <end position="115"/>
    </location>
</feature>
<feature type="strand" evidence="6">
    <location>
        <begin position="123"/>
        <end position="126"/>
    </location>
</feature>
<feature type="turn" evidence="6">
    <location>
        <begin position="127"/>
        <end position="129"/>
    </location>
</feature>
<feature type="strand" evidence="6">
    <location>
        <begin position="130"/>
        <end position="134"/>
    </location>
</feature>
<feature type="helix" evidence="6">
    <location>
        <begin position="148"/>
        <end position="157"/>
    </location>
</feature>
<feature type="strand" evidence="6">
    <location>
        <begin position="162"/>
        <end position="164"/>
    </location>
</feature>
<feature type="strand" evidence="6">
    <location>
        <begin position="166"/>
        <end position="172"/>
    </location>
</feature>
<feature type="strand" evidence="6">
    <location>
        <begin position="175"/>
        <end position="177"/>
    </location>
</feature>
<feature type="strand" evidence="6">
    <location>
        <begin position="179"/>
        <end position="186"/>
    </location>
</feature>
<feature type="helix" evidence="6">
    <location>
        <begin position="194"/>
        <end position="206"/>
    </location>
</feature>
<feature type="helix" evidence="6">
    <location>
        <begin position="212"/>
        <end position="234"/>
    </location>
</feature>
<feature type="helix" evidence="6">
    <location>
        <begin position="243"/>
        <end position="263"/>
    </location>
</feature>
<feature type="helix" evidence="6">
    <location>
        <begin position="266"/>
        <end position="284"/>
    </location>
</feature>
<feature type="helix" evidence="6">
    <location>
        <begin position="285"/>
        <end position="289"/>
    </location>
</feature>
<feature type="strand" evidence="6">
    <location>
        <begin position="293"/>
        <end position="295"/>
    </location>
</feature>
<feature type="helix" evidence="6">
    <location>
        <begin position="303"/>
        <end position="305"/>
    </location>
</feature>
<feature type="strand" evidence="6">
    <location>
        <begin position="306"/>
        <end position="309"/>
    </location>
</feature>
<feature type="strand" evidence="6">
    <location>
        <begin position="312"/>
        <end position="315"/>
    </location>
</feature>
<feature type="helix" evidence="6">
    <location>
        <begin position="326"/>
        <end position="328"/>
    </location>
</feature>
<feature type="helix" evidence="6">
    <location>
        <begin position="335"/>
        <end position="356"/>
    </location>
</feature>
<feature type="helix" evidence="6">
    <location>
        <begin position="362"/>
        <end position="386"/>
    </location>
</feature>
<feature type="helix" evidence="6">
    <location>
        <begin position="390"/>
        <end position="392"/>
    </location>
</feature>
<feature type="helix" evidence="6">
    <location>
        <begin position="395"/>
        <end position="397"/>
    </location>
</feature>
<feature type="helix" evidence="6">
    <location>
        <begin position="398"/>
        <end position="416"/>
    </location>
</feature>
<feature type="helix" evidence="6">
    <location>
        <begin position="418"/>
        <end position="421"/>
    </location>
</feature>
<feature type="helix" evidence="6">
    <location>
        <begin position="422"/>
        <end position="431"/>
    </location>
</feature>
<feature type="helix" evidence="7">
    <location>
        <begin position="434"/>
        <end position="438"/>
    </location>
</feature>
<protein>
    <recommendedName>
        <fullName evidence="3">Glucosamine kinase</fullName>
        <shortName evidence="3">GlcN kinase</shortName>
        <shortName evidence="3">GlcNK</shortName>
        <ecNumber evidence="2">2.7.1.8</ecNumber>
    </recommendedName>
</protein>
<reference key="1">
    <citation type="submission" date="2016-10" db="EMBL/GenBank/DDBJ databases">
        <authorList>
            <person name="Varghese N."/>
        </authorList>
    </citation>
    <scope>NUCLEOTIDE SEQUENCE [LARGE SCALE GENOMIC DNA]</scope>
    <source>
        <strain>DSM 45096 / BCRC 16803 / CGMCC 4.1857 / CIP 109030 / JCM 12277 / KCTC 19219 / NBRC 100920 / 33214</strain>
    </source>
</reference>
<reference key="2">
    <citation type="journal article" date="2019" name="MBio">
        <title>Molecular Fingerprints for a Novel Enzyme Family in Actinobacteria with Glucosamine Kinase Activity.</title>
        <authorList>
            <person name="Manso J.A."/>
            <person name="Nunes-Costa D."/>
            <person name="Macedo-Ribeiro S."/>
            <person name="Empadinhas N."/>
            <person name="Pereira P.J.B."/>
        </authorList>
    </citation>
    <scope>X-RAY CRYSTALLOGRAPHY (1.98 ANGSTROMS) OF APOENZYME AND IN COMPLEXES WITH ADP; PHOSPHATE; GLUCOSAMINE AND MAGNESIUM</scope>
    <scope>FUNCTION</scope>
    <scope>CATALYTIC ACTIVITY</scope>
    <scope>SUBSTRATE SPECIFICITY</scope>
    <scope>BIOPHYSICOCHEMICAL PROPERTIES</scope>
    <scope>COFACTOR</scope>
    <scope>SUBUNIT</scope>
    <scope>MUTAGENESIS OF GLN-405</scope>
    <source>
        <strain>DSM 45096 / BCRC 16803 / CGMCC 4.1857 / CIP 109030 / JCM 12277 / KCTC 19219 / NBRC 100920 / 33214</strain>
    </source>
</reference>
<comment type="function">
    <text evidence="2">Catalyzes the ATP-dependent phosphorylation of D-glucosamine (GlcN) to D-glucosamine 6-phosphate. May be involved in the phosphorylation of acquired extracellular GlcN derived from the hydrolysis of chitosan, i.e., in the incorporation of exogenous GlcN into the bacterial GlcNAc metabolism. To a lesser extent, is also active on glucose, but is unable to phosphorylate maltose, 18 other sugars and several aminoglycoside antibiotics.</text>
</comment>
<comment type="catalytic activity">
    <reaction evidence="2">
        <text>D-glucosamine + ATP = D-glucosamine 6-phosphate + ADP + H(+)</text>
        <dbReference type="Rhea" id="RHEA:10948"/>
        <dbReference type="ChEBI" id="CHEBI:15378"/>
        <dbReference type="ChEBI" id="CHEBI:30616"/>
        <dbReference type="ChEBI" id="CHEBI:58723"/>
        <dbReference type="ChEBI" id="CHEBI:58725"/>
        <dbReference type="ChEBI" id="CHEBI:456216"/>
        <dbReference type="EC" id="2.7.1.8"/>
    </reaction>
</comment>
<comment type="cofactor">
    <cofactor evidence="2">
        <name>Mg(2+)</name>
        <dbReference type="ChEBI" id="CHEBI:18420"/>
    </cofactor>
    <text evidence="2">Binds 2 Mg(2+) ions per subunit.</text>
</comment>
<comment type="biophysicochemical properties">
    <kinetics>
        <KM evidence="2">8 mM for D-glucosamine</KM>
        <KM evidence="2">100 mM for D-glucose</KM>
    </kinetics>
</comment>
<comment type="subunit">
    <text evidence="2">Monomer.</text>
</comment>
<comment type="similarity">
    <text evidence="1 4">Belongs to the actinobacterial glucosamine kinase family.</text>
</comment>
<dbReference type="EC" id="2.7.1.8" evidence="2"/>
<dbReference type="EMBL" id="FOAZ01000014">
    <property type="protein sequence ID" value="SEL87111.1"/>
    <property type="molecule type" value="Genomic_DNA"/>
</dbReference>
<dbReference type="RefSeq" id="WP_052439179.1">
    <property type="nucleotide sequence ID" value="NZ_BBPN01000035.1"/>
</dbReference>
<dbReference type="PDB" id="6HWJ">
    <property type="method" value="X-ray"/>
    <property type="resolution" value="1.98 A"/>
    <property type="chains" value="A/B=1-438"/>
</dbReference>
<dbReference type="PDB" id="6HWK">
    <property type="method" value="X-ray"/>
    <property type="resolution" value="2.69 A"/>
    <property type="chains" value="A/B/C/D=1-438"/>
</dbReference>
<dbReference type="PDB" id="6HWL">
    <property type="method" value="X-ray"/>
    <property type="resolution" value="2.15 A"/>
    <property type="chains" value="A/B=1-438"/>
</dbReference>
<dbReference type="PDBsum" id="6HWJ"/>
<dbReference type="PDBsum" id="6HWK"/>
<dbReference type="PDBsum" id="6HWL"/>
<dbReference type="SASBDB" id="A0A1H7TQR5"/>
<dbReference type="SMR" id="A0A1H7TQR5"/>
<dbReference type="STRING" id="235985.SAMN05414137_114149"/>
<dbReference type="eggNOG" id="COG3281">
    <property type="taxonomic scope" value="Bacteria"/>
</dbReference>
<dbReference type="OrthoDB" id="3787729at2"/>
<dbReference type="BRENDA" id="2.7.1.8">
    <property type="organism ID" value="17853"/>
</dbReference>
<dbReference type="Proteomes" id="UP000183015">
    <property type="component" value="Unassembled WGS sequence"/>
</dbReference>
<dbReference type="GO" id="GO:0005524">
    <property type="term" value="F:ATP binding"/>
    <property type="evidence" value="ECO:0007669"/>
    <property type="project" value="UniProtKB-KW"/>
</dbReference>
<dbReference type="GO" id="GO:0047931">
    <property type="term" value="F:glucosamine kinase activity"/>
    <property type="evidence" value="ECO:0007669"/>
    <property type="project" value="UniProtKB-UniRule"/>
</dbReference>
<dbReference type="GO" id="GO:0000287">
    <property type="term" value="F:magnesium ion binding"/>
    <property type="evidence" value="ECO:0007669"/>
    <property type="project" value="UniProtKB-UniRule"/>
</dbReference>
<dbReference type="GO" id="GO:0005975">
    <property type="term" value="P:carbohydrate metabolic process"/>
    <property type="evidence" value="ECO:0007669"/>
    <property type="project" value="UniProtKB-UniRule"/>
</dbReference>
<dbReference type="Gene3D" id="3.90.1200.10">
    <property type="match status" value="1"/>
</dbReference>
<dbReference type="HAMAP" id="MF_02218">
    <property type="entry name" value="GlcN_kinase"/>
    <property type="match status" value="1"/>
</dbReference>
<dbReference type="InterPro" id="IPR043674">
    <property type="entry name" value="GlcN_kinase"/>
</dbReference>
<dbReference type="InterPro" id="IPR011009">
    <property type="entry name" value="Kinase-like_dom_sf"/>
</dbReference>
<dbReference type="SUPFAM" id="SSF56112">
    <property type="entry name" value="Protein kinase-like (PK-like)"/>
    <property type="match status" value="1"/>
</dbReference>